<feature type="signal peptide" evidence="1">
    <location>
        <begin position="1"/>
        <end position="27"/>
    </location>
</feature>
<feature type="chain" id="PRO_0000036013" description="UDP-glucuronosyltransferase 1-2">
    <location>
        <begin position="28"/>
        <end position="533"/>
    </location>
</feature>
<feature type="transmembrane region" description="Helical" evidence="1">
    <location>
        <begin position="491"/>
        <end position="507"/>
    </location>
</feature>
<feature type="glycosylation site" description="N-linked (GlcNAc...) asparagine" evidence="1">
    <location>
        <position position="133"/>
    </location>
</feature>
<feature type="glycosylation site" description="N-linked (GlcNAc...) asparagine" evidence="1">
    <location>
        <position position="141"/>
    </location>
</feature>
<feature type="glycosylation site" description="N-linked (GlcNAc...) asparagine" evidence="1">
    <location>
        <position position="295"/>
    </location>
</feature>
<feature type="glycosylation site" description="N-linked (GlcNAc...) asparagine" evidence="1">
    <location>
        <position position="433"/>
    </location>
</feature>
<feature type="sequence conflict" description="In Ref. 1." evidence="2" ref="1">
    <location>
        <begin position="2"/>
        <end position="3"/>
    </location>
</feature>
<feature type="sequence conflict" description="In Ref. 2; BAA07261." evidence="2" ref="2">
    <original>CG</original>
    <variation>SP</variation>
    <location>
        <begin position="177"/>
        <end position="178"/>
    </location>
</feature>
<gene>
    <name type="primary">Ugt1a2</name>
    <name type="synonym">Ugt1</name>
</gene>
<sequence>MDTGLCAPLRGLSGLLLLLCALPWAEGGKVLVFPMEGSHWLSMRDVVRELHARGHQAVVLAPEVTVHMKGEDFFTLQTYAFPYTKEEYQREILGNAKKGFEPQHFVKTFFETMASIKKFFDLYANSCAALLHNKTLIQQLNSSSFDVVLTDPVFPCGALLAKYLQIPAVFFLRSVPCGIDYEATQCPKPSSYIPNLLTMLSDHMTFLQRVKNMLYPLTLKYICHLSITPYESLASELLQREMSLVEVLSHASVWLFRGDFVFDYPRPIMPNMVFIGGINCVIKKPLSQEFEAYVNASGEHGIVVFSLGSMVSEIPEKKAMEIAEALGRIPQTLLWRYTGTRPSNLAKNTILVKWLPQNDLLGHPKARAFITHSGSHGIYEGICNGVPMVMMPLFGDQMDNAKRMETRGAGVTLNVLEMTADDLENALKTVINNKSYKENIMRLSSLHKDRPIEPLDLAVFWVEYVMRHKGAPHLRPAAHDLTWYQYHSLDVIGFLLAIVLTVVFIVYKSCAYGCRKCFGGKGRVKKSHKSKTH</sequence>
<name>UD12_RAT</name>
<comment type="function">
    <text>UDPGT is of major importance in the conjugation and subsequent elimination of potentially toxic xenobiotics and endogenous compounds.</text>
</comment>
<comment type="catalytic activity">
    <reaction>
        <text>glucuronate acceptor + UDP-alpha-D-glucuronate = acceptor beta-D-glucuronoside + UDP + H(+)</text>
        <dbReference type="Rhea" id="RHEA:21032"/>
        <dbReference type="ChEBI" id="CHEBI:15378"/>
        <dbReference type="ChEBI" id="CHEBI:58052"/>
        <dbReference type="ChEBI" id="CHEBI:58223"/>
        <dbReference type="ChEBI" id="CHEBI:132367"/>
        <dbReference type="ChEBI" id="CHEBI:132368"/>
        <dbReference type="EC" id="2.4.1.17"/>
    </reaction>
</comment>
<comment type="subcellular location">
    <subcellularLocation>
        <location>Microsome</location>
    </subcellularLocation>
    <subcellularLocation>
        <location evidence="2">Endoplasmic reticulum membrane</location>
        <topology evidence="2">Single-pass membrane protein</topology>
    </subcellularLocation>
</comment>
<comment type="alternative products">
    <event type="alternative splicing"/>
    <isoform>
        <id>P20720-1</id>
        <name>1</name>
        <sequence type="displayed"/>
    </isoform>
    <text>A number of isoforms are produced. The different isozymes have a different N-terminal domain and a common C-terminal domain of 245 residues.</text>
</comment>
<comment type="similarity">
    <text evidence="2">Belongs to the UDP-glycosyltransferase family.</text>
</comment>
<keyword id="KW-0025">Alternative splicing</keyword>
<keyword id="KW-0256">Endoplasmic reticulum</keyword>
<keyword id="KW-0325">Glycoprotein</keyword>
<keyword id="KW-0328">Glycosyltransferase</keyword>
<keyword id="KW-0472">Membrane</keyword>
<keyword id="KW-0492">Microsome</keyword>
<keyword id="KW-1185">Reference proteome</keyword>
<keyword id="KW-0732">Signal</keyword>
<keyword id="KW-0808">Transferase</keyword>
<keyword id="KW-0812">Transmembrane</keyword>
<keyword id="KW-1133">Transmembrane helix</keyword>
<dbReference type="EC" id="2.4.1.17"/>
<dbReference type="EMBL" id="M34007">
    <property type="protein sequence ID" value="AAA42312.1"/>
    <property type="molecule type" value="mRNA"/>
</dbReference>
<dbReference type="EMBL" id="D38066">
    <property type="protein sequence ID" value="BAA07261.1"/>
    <property type="molecule type" value="Genomic_DNA"/>
</dbReference>
<dbReference type="PIR" id="A35343">
    <property type="entry name" value="A35343"/>
</dbReference>
<dbReference type="SMR" id="P20720"/>
<dbReference type="FunCoup" id="P20720">
    <property type="interactions" value="15"/>
</dbReference>
<dbReference type="CAZy" id="GT1">
    <property type="family name" value="Glycosyltransferase Family 1"/>
</dbReference>
<dbReference type="GlyCosmos" id="P20720">
    <property type="glycosylation" value="4 sites, No reported glycans"/>
</dbReference>
<dbReference type="GlyGen" id="P20720">
    <property type="glycosylation" value="4 sites"/>
</dbReference>
<dbReference type="PhosphoSitePlus" id="P20720"/>
<dbReference type="AGR" id="RGD:1549741"/>
<dbReference type="RGD" id="1549741">
    <property type="gene designation" value="Ugt1a2"/>
</dbReference>
<dbReference type="InParanoid" id="P20720"/>
<dbReference type="BRENDA" id="2.4.1.17">
    <property type="organism ID" value="5301"/>
</dbReference>
<dbReference type="Reactome" id="R-RNO-156588">
    <property type="pathway name" value="Glucuronidation"/>
</dbReference>
<dbReference type="Reactome" id="R-RNO-189483">
    <property type="pathway name" value="Heme degradation"/>
</dbReference>
<dbReference type="Reactome" id="R-RNO-9749641">
    <property type="pathway name" value="Aspirin ADME"/>
</dbReference>
<dbReference type="Reactome" id="R-RNO-9754706">
    <property type="pathway name" value="Atorvastatin ADME"/>
</dbReference>
<dbReference type="Reactome" id="R-RNO-9757110">
    <property type="pathway name" value="Prednisone ADME"/>
</dbReference>
<dbReference type="PRO" id="PR:P20720"/>
<dbReference type="Proteomes" id="UP000002494">
    <property type="component" value="Unplaced"/>
</dbReference>
<dbReference type="GO" id="GO:0005783">
    <property type="term" value="C:endoplasmic reticulum"/>
    <property type="evidence" value="ECO:0000266"/>
    <property type="project" value="RGD"/>
</dbReference>
<dbReference type="GO" id="GO:0005789">
    <property type="term" value="C:endoplasmic reticulum membrane"/>
    <property type="evidence" value="ECO:0007669"/>
    <property type="project" value="UniProtKB-SubCell"/>
</dbReference>
<dbReference type="GO" id="GO:0019899">
    <property type="term" value="F:enzyme binding"/>
    <property type="evidence" value="ECO:0000266"/>
    <property type="project" value="RGD"/>
</dbReference>
<dbReference type="GO" id="GO:0015020">
    <property type="term" value="F:glucuronosyltransferase activity"/>
    <property type="evidence" value="ECO:0000266"/>
    <property type="project" value="RGD"/>
</dbReference>
<dbReference type="GO" id="GO:0042803">
    <property type="term" value="F:protein homodimerization activity"/>
    <property type="evidence" value="ECO:0000266"/>
    <property type="project" value="RGD"/>
</dbReference>
<dbReference type="GO" id="GO:0001972">
    <property type="term" value="F:retinoic acid binding"/>
    <property type="evidence" value="ECO:0000266"/>
    <property type="project" value="RGD"/>
</dbReference>
<dbReference type="GO" id="GO:0031100">
    <property type="term" value="P:animal organ regeneration"/>
    <property type="evidence" value="ECO:0000270"/>
    <property type="project" value="RGD"/>
</dbReference>
<dbReference type="GO" id="GO:0032782">
    <property type="term" value="P:bile acid secretion"/>
    <property type="evidence" value="ECO:0000266"/>
    <property type="project" value="RGD"/>
</dbReference>
<dbReference type="GO" id="GO:0008210">
    <property type="term" value="P:estrogen metabolic process"/>
    <property type="evidence" value="ECO:0000266"/>
    <property type="project" value="RGD"/>
</dbReference>
<dbReference type="GO" id="GO:0009812">
    <property type="term" value="P:flavonoid metabolic process"/>
    <property type="evidence" value="ECO:0000266"/>
    <property type="project" value="RGD"/>
</dbReference>
<dbReference type="GO" id="GO:0001889">
    <property type="term" value="P:liver development"/>
    <property type="evidence" value="ECO:0000270"/>
    <property type="project" value="RGD"/>
</dbReference>
<dbReference type="GO" id="GO:0070640">
    <property type="term" value="P:vitamin D3 metabolic process"/>
    <property type="evidence" value="ECO:0000266"/>
    <property type="project" value="RGD"/>
</dbReference>
<dbReference type="GO" id="GO:0006805">
    <property type="term" value="P:xenobiotic metabolic process"/>
    <property type="evidence" value="ECO:0000266"/>
    <property type="project" value="RGD"/>
</dbReference>
<dbReference type="CDD" id="cd03784">
    <property type="entry name" value="GT1_Gtf-like"/>
    <property type="match status" value="1"/>
</dbReference>
<dbReference type="FunFam" id="3.40.50.2000:FF:000001">
    <property type="entry name" value="UDP-glucuronosyltransferase"/>
    <property type="match status" value="1"/>
</dbReference>
<dbReference type="FunFam" id="3.40.50.2000:FF:000066">
    <property type="entry name" value="UDP-glucuronosyltransferase 1-1"/>
    <property type="match status" value="1"/>
</dbReference>
<dbReference type="Gene3D" id="3.40.50.2000">
    <property type="entry name" value="Glycogen Phosphorylase B"/>
    <property type="match status" value="2"/>
</dbReference>
<dbReference type="InterPro" id="IPR050271">
    <property type="entry name" value="UDP-glycosyltransferase"/>
</dbReference>
<dbReference type="InterPro" id="IPR002213">
    <property type="entry name" value="UDP_glucos_trans"/>
</dbReference>
<dbReference type="InterPro" id="IPR035595">
    <property type="entry name" value="UDP_glycos_trans_CS"/>
</dbReference>
<dbReference type="PANTHER" id="PTHR48043">
    <property type="entry name" value="EG:EG0003.4 PROTEIN-RELATED"/>
    <property type="match status" value="1"/>
</dbReference>
<dbReference type="PANTHER" id="PTHR48043:SF161">
    <property type="entry name" value="UDP GLUCURONOSYLTRANSFERASE FAMILY 1 MEMBER A1"/>
    <property type="match status" value="1"/>
</dbReference>
<dbReference type="Pfam" id="PF00201">
    <property type="entry name" value="UDPGT"/>
    <property type="match status" value="1"/>
</dbReference>
<dbReference type="SUPFAM" id="SSF53756">
    <property type="entry name" value="UDP-Glycosyltransferase/glycogen phosphorylase"/>
    <property type="match status" value="1"/>
</dbReference>
<dbReference type="PROSITE" id="PS00375">
    <property type="entry name" value="UDPGT"/>
    <property type="match status" value="1"/>
</dbReference>
<evidence type="ECO:0000255" key="1"/>
<evidence type="ECO:0000305" key="2"/>
<reference key="1">
    <citation type="journal article" date="1990" name="Biochem. Biophys. Res. Commun.">
        <title>Isolation and sequencing of rat liver bilirubin UDP-glucuronosyltransferase cDNA: possible alternate splicing of a common primary transcript.</title>
        <authorList>
            <person name="Sato H."/>
            <person name="Koiwai O."/>
            <person name="Tanabe K."/>
            <person name="Kashiwamata S."/>
        </authorList>
    </citation>
    <scope>NUCLEOTIDE SEQUENCE [MRNA]</scope>
    <source>
        <tissue>Liver</tissue>
    </source>
</reference>
<reference key="2">
    <citation type="journal article" date="1995" name="J. Biochem.">
        <title>Drug-responsive and tissue-specific alternative expression of multiple first exons in rat UDP-glucuronosyltransferase family 1 (UGT1) gene complex.</title>
        <authorList>
            <person name="Emi Y."/>
            <person name="Ikushiro S."/>
            <person name="Iyanagi T."/>
        </authorList>
    </citation>
    <scope>NUCLEOTIDE SEQUENCE [GENOMIC DNA] OF 1-288</scope>
    <source>
        <strain>Wistar</strain>
    </source>
</reference>
<accession>P20720</accession>
<accession>Q64636</accession>
<protein>
    <recommendedName>
        <fullName>UDP-glucuronosyltransferase 1-2</fullName>
        <shortName>UDPGT 1-2</shortName>
        <shortName>UGT1*2</shortName>
        <shortName>UGT1-02</shortName>
        <shortName>UGT1.2</shortName>
        <ecNumber>2.4.1.17</ecNumber>
    </recommendedName>
    <alternativeName>
        <fullName>B2</fullName>
    </alternativeName>
    <alternativeName>
        <fullName>Bilirubin-specific UDPGT</fullName>
    </alternativeName>
    <alternativeName>
        <fullName>UDP-glucuronosyltransferase 1A2</fullName>
        <shortName>UGT1A2</shortName>
    </alternativeName>
</protein>
<organism>
    <name type="scientific">Rattus norvegicus</name>
    <name type="common">Rat</name>
    <dbReference type="NCBI Taxonomy" id="10116"/>
    <lineage>
        <taxon>Eukaryota</taxon>
        <taxon>Metazoa</taxon>
        <taxon>Chordata</taxon>
        <taxon>Craniata</taxon>
        <taxon>Vertebrata</taxon>
        <taxon>Euteleostomi</taxon>
        <taxon>Mammalia</taxon>
        <taxon>Eutheria</taxon>
        <taxon>Euarchontoglires</taxon>
        <taxon>Glires</taxon>
        <taxon>Rodentia</taxon>
        <taxon>Myomorpha</taxon>
        <taxon>Muroidea</taxon>
        <taxon>Muridae</taxon>
        <taxon>Murinae</taxon>
        <taxon>Rattus</taxon>
    </lineage>
</organism>
<proteinExistence type="evidence at transcript level"/>